<keyword id="KW-0007">Acetylation</keyword>
<keyword id="KW-0025">Alternative splicing</keyword>
<keyword id="KW-0238">DNA-binding</keyword>
<keyword id="KW-0269">Exonuclease</keyword>
<keyword id="KW-0378">Hydrolase</keyword>
<keyword id="KW-0479">Metal-binding</keyword>
<keyword id="KW-0488">Methylation</keyword>
<keyword id="KW-0507">mRNA processing</keyword>
<keyword id="KW-0540">Nuclease</keyword>
<keyword id="KW-0539">Nucleus</keyword>
<keyword id="KW-0597">Phosphoprotein</keyword>
<keyword id="KW-1267">Proteomics identification</keyword>
<keyword id="KW-1185">Reference proteome</keyword>
<keyword id="KW-0804">Transcription</keyword>
<keyword id="KW-0805">Transcription regulation</keyword>
<keyword id="KW-0806">Transcription termination</keyword>
<keyword id="KW-0862">Zinc</keyword>
<keyword id="KW-0863">Zinc-finger</keyword>
<proteinExistence type="evidence at protein level"/>
<protein>
    <recommendedName>
        <fullName>5'-3' exoribonuclease 2</fullName>
        <ecNumber>3.1.13.-</ecNumber>
    </recommendedName>
    <alternativeName>
        <fullName>DHM1-like protein</fullName>
        <shortName>DHP protein</shortName>
    </alternativeName>
</protein>
<feature type="chain" id="PRO_0000071396" description="5'-3' exoribonuclease 2">
    <location>
        <begin position="1"/>
        <end position="950"/>
    </location>
</feature>
<feature type="zinc finger region" description="CCHC-type">
    <location>
        <begin position="262"/>
        <end position="278"/>
    </location>
</feature>
<feature type="region of interest" description="Disordered" evidence="3">
    <location>
        <begin position="408"/>
        <end position="508"/>
    </location>
</feature>
<feature type="region of interest" description="Disordered" evidence="3">
    <location>
        <begin position="911"/>
        <end position="950"/>
    </location>
</feature>
<feature type="compositionally biased region" description="Basic residues" evidence="3">
    <location>
        <begin position="416"/>
        <end position="426"/>
    </location>
</feature>
<feature type="compositionally biased region" description="Polar residues" evidence="3">
    <location>
        <begin position="445"/>
        <end position="458"/>
    </location>
</feature>
<feature type="compositionally biased region" description="Low complexity" evidence="3">
    <location>
        <begin position="468"/>
        <end position="482"/>
    </location>
</feature>
<feature type="compositionally biased region" description="Basic and acidic residues" evidence="3">
    <location>
        <begin position="920"/>
        <end position="937"/>
    </location>
</feature>
<feature type="modified residue" description="N6-acetyllysine" evidence="2">
    <location>
        <position position="286"/>
    </location>
</feature>
<feature type="modified residue" description="Phosphothreonine" evidence="21 27 29">
    <location>
        <position position="439"/>
    </location>
</feature>
<feature type="modified residue" description="Phosphoserine" evidence="17 18 19 21 22 23 24 25 26 27 29">
    <location>
        <position position="448"/>
    </location>
</feature>
<feature type="modified residue" description="Phosphoserine" evidence="24">
    <location>
        <position position="471"/>
    </location>
</feature>
<feature type="modified residue" description="Phosphoserine" evidence="24">
    <location>
        <position position="473"/>
    </location>
</feature>
<feature type="modified residue" description="Phosphoserine" evidence="24">
    <location>
        <position position="475"/>
    </location>
</feature>
<feature type="modified residue" description="Phosphoserine" evidence="2">
    <location>
        <position position="482"/>
    </location>
</feature>
<feature type="modified residue" description="Phosphoserine" evidence="27">
    <location>
        <position position="487"/>
    </location>
</feature>
<feature type="modified residue" description="Phosphoserine" evidence="18 20 23 24 25 26 27 29">
    <location>
        <position position="499"/>
    </location>
</feature>
<feature type="modified residue" description="Phosphoserine" evidence="18 20 23 25 26 27 29">
    <location>
        <position position="501"/>
    </location>
</feature>
<feature type="modified residue" description="Phosphoserine" evidence="27">
    <location>
        <position position="678"/>
    </location>
</feature>
<feature type="modified residue" description="Asymmetric dimethylarginine; alternate" evidence="28">
    <location>
        <position position="824"/>
    </location>
</feature>
<feature type="modified residue" description="Omega-N-methylarginine; alternate" evidence="28">
    <location>
        <position position="824"/>
    </location>
</feature>
<feature type="modified residue" description="Asymmetric dimethylarginine; alternate" evidence="28">
    <location>
        <position position="847"/>
    </location>
</feature>
<feature type="modified residue" description="Omega-N-methylarginine; alternate" evidence="28">
    <location>
        <position position="847"/>
    </location>
</feature>
<feature type="modified residue" description="Asymmetric dimethylarginine; alternate" evidence="28">
    <location>
        <position position="851"/>
    </location>
</feature>
<feature type="modified residue" description="Omega-N-methylarginine; alternate" evidence="28">
    <location>
        <position position="851"/>
    </location>
</feature>
<feature type="modified residue" description="Asymmetric dimethylarginine" evidence="2">
    <location>
        <position position="880"/>
    </location>
</feature>
<feature type="modified residue" description="Asymmetric dimethylarginine; alternate" evidence="2">
    <location>
        <position position="883"/>
    </location>
</feature>
<feature type="modified residue" description="Omega-N-methylarginine; alternate" evidence="28">
    <location>
        <position position="883"/>
    </location>
</feature>
<feature type="modified residue" description="Omega-N-methylarginine" evidence="28">
    <location>
        <position position="895"/>
    </location>
</feature>
<feature type="modified residue" description="Asymmetric dimethylarginine; alternate" evidence="28">
    <location>
        <position position="946"/>
    </location>
</feature>
<feature type="modified residue" description="Omega-N-methylarginine; alternate" evidence="28">
    <location>
        <position position="946"/>
    </location>
</feature>
<feature type="splice variant" id="VSP_020596" description="In isoform 2." evidence="15">
    <location>
        <begin position="1"/>
        <end position="76"/>
    </location>
</feature>
<feature type="sequence variant" id="VAR_027516" description="In dbSNP:rs6137324.">
    <original>R</original>
    <variation>M</variation>
    <location>
        <position position="743"/>
    </location>
</feature>
<feature type="sequence variant" id="VAR_053002" description="In dbSNP:rs6047420.">
    <original>R</original>
    <variation>C</variation>
    <location>
        <position position="925"/>
    </location>
</feature>
<feature type="sequence conflict" description="In Ref. 1; AAQ13577." evidence="16" ref="1">
    <original>Y</original>
    <variation>C</variation>
    <location>
        <position position="14"/>
    </location>
</feature>
<feature type="sequence conflict" description="In Ref. 1; AAD55138/AAQ13577." evidence="16" ref="1">
    <original>A</original>
    <variation>V</variation>
    <location>
        <position position="109"/>
    </location>
</feature>
<feature type="sequence conflict" description="In Ref. 1; AAD55138." evidence="16" ref="1">
    <original>SKE</original>
    <variation>IKR</variation>
    <location>
        <begin position="122"/>
        <end position="124"/>
    </location>
</feature>
<feature type="sequence conflict" description="In Ref. 1; AAQ13577." evidence="16" ref="1">
    <original>GLATHE</original>
    <variation>AFPHMN</variation>
    <location>
        <begin position="240"/>
        <end position="245"/>
    </location>
</feature>
<feature type="sequence conflict" description="In Ref. 1; AAD55138/AAQ13577." evidence="16" ref="1">
    <original>K</original>
    <variation>R</variation>
    <location>
        <position position="259"/>
    </location>
</feature>
<feature type="sequence conflict" description="In Ref. 1; AAD55138/AAQ13577." evidence="16" ref="1">
    <original>P</original>
    <variation>S</variation>
    <location>
        <position position="280"/>
    </location>
</feature>
<feature type="sequence conflict" description="In Ref. 1; AAQ13577." evidence="16" ref="1">
    <original>L</original>
    <variation>V</variation>
    <location>
        <position position="313"/>
    </location>
</feature>
<feature type="sequence conflict" description="In Ref. 1; AAD55138." evidence="16" ref="1">
    <original>E</original>
    <variation>D</variation>
    <location>
        <position position="463"/>
    </location>
</feature>
<feature type="sequence conflict" description="In Ref. 1; AAQ13577." evidence="16" ref="1">
    <original>P</original>
    <variation>S</variation>
    <location>
        <position position="582"/>
    </location>
</feature>
<feature type="sequence conflict" description="In Ref. 1; AAD55138." evidence="16" ref="1">
    <original>D</original>
    <variation>E</variation>
    <location>
        <position position="584"/>
    </location>
</feature>
<feature type="sequence conflict" description="In Ref. 1; AAD55138." evidence="16" ref="1">
    <original>S</original>
    <variation>A</variation>
    <location>
        <position position="737"/>
    </location>
</feature>
<feature type="sequence conflict" description="In Ref. 2; AAR24369." evidence="16" ref="2">
    <original>F</original>
    <variation>L</variation>
    <location>
        <position position="760"/>
    </location>
</feature>
<feature type="sequence conflict" description="In Ref. 1; AAD55138." evidence="16" ref="1">
    <original>E</original>
    <variation>G</variation>
    <location>
        <position position="787"/>
    </location>
</feature>
<feature type="sequence conflict" description="In Ref. 2; AAR24369." evidence="16" ref="2">
    <original>P</original>
    <variation>L</variation>
    <location>
        <position position="874"/>
    </location>
</feature>
<reference key="1">
    <citation type="journal article" date="1999" name="Genomics">
        <title>Cloning and mapping of the XRN2 gene to human chromosome 20p11.1-p11.2.</title>
        <authorList>
            <person name="Zhang M."/>
            <person name="Yu L."/>
            <person name="Xin Y."/>
            <person name="Hu P."/>
            <person name="Fu Q."/>
            <person name="Yu C."/>
            <person name="Zhao S.Y."/>
        </authorList>
    </citation>
    <scope>NUCLEOTIDE SEQUENCE [MRNA] (ISOFORM 1)</scope>
    <scope>TISSUE SPECIFICITY</scope>
</reference>
<reference key="2">
    <citation type="journal article" date="2005" name="DNA Seq.">
        <title>A novel splice variant of human XRN2 gene is mainly expressed in blood leukocyte.</title>
        <authorList>
            <person name="Li J."/>
            <person name="Zheng H."/>
            <person name="Ji C."/>
            <person name="Fei X."/>
            <person name="Zheng M."/>
            <person name="Gao Y."/>
            <person name="Ren Y."/>
            <person name="Gu S."/>
            <person name="Xie Y."/>
            <person name="Mao Y."/>
        </authorList>
    </citation>
    <scope>NUCLEOTIDE SEQUENCE [MRNA] (ISOFORM 2)</scope>
    <scope>TISSUE SPECIFICITY</scope>
</reference>
<reference key="3">
    <citation type="journal article" date="2001" name="Genome Res.">
        <title>Towards a catalog of human genes and proteins: sequencing and analysis of 500 novel complete protein coding human cDNAs.</title>
        <authorList>
            <person name="Wiemann S."/>
            <person name="Weil B."/>
            <person name="Wellenreuther R."/>
            <person name="Gassenhuber J."/>
            <person name="Glassl S."/>
            <person name="Ansorge W."/>
            <person name="Boecher M."/>
            <person name="Bloecker H."/>
            <person name="Bauersachs S."/>
            <person name="Blum H."/>
            <person name="Lauber J."/>
            <person name="Duesterhoeft A."/>
            <person name="Beyer A."/>
            <person name="Koehrer K."/>
            <person name="Strack N."/>
            <person name="Mewes H.-W."/>
            <person name="Ottenwaelder B."/>
            <person name="Obermaier B."/>
            <person name="Tampe J."/>
            <person name="Heubner D."/>
            <person name="Wambutt R."/>
            <person name="Korn B."/>
            <person name="Klein M."/>
            <person name="Poustka A."/>
        </authorList>
    </citation>
    <scope>NUCLEOTIDE SEQUENCE [LARGE SCALE MRNA] (ISOFORM 1)</scope>
    <source>
        <tissue>Testis</tissue>
    </source>
</reference>
<reference key="4">
    <citation type="journal article" date="2001" name="Nature">
        <title>The DNA sequence and comparative analysis of human chromosome 20.</title>
        <authorList>
            <person name="Deloukas P."/>
            <person name="Matthews L.H."/>
            <person name="Ashurst J.L."/>
            <person name="Burton J."/>
            <person name="Gilbert J.G.R."/>
            <person name="Jones M."/>
            <person name="Stavrides G."/>
            <person name="Almeida J.P."/>
            <person name="Babbage A.K."/>
            <person name="Bagguley C.L."/>
            <person name="Bailey J."/>
            <person name="Barlow K.F."/>
            <person name="Bates K.N."/>
            <person name="Beard L.M."/>
            <person name="Beare D.M."/>
            <person name="Beasley O.P."/>
            <person name="Bird C.P."/>
            <person name="Blakey S.E."/>
            <person name="Bridgeman A.M."/>
            <person name="Brown A.J."/>
            <person name="Buck D."/>
            <person name="Burrill W.D."/>
            <person name="Butler A.P."/>
            <person name="Carder C."/>
            <person name="Carter N.P."/>
            <person name="Chapman J.C."/>
            <person name="Clamp M."/>
            <person name="Clark G."/>
            <person name="Clark L.N."/>
            <person name="Clark S.Y."/>
            <person name="Clee C.M."/>
            <person name="Clegg S."/>
            <person name="Cobley V.E."/>
            <person name="Collier R.E."/>
            <person name="Connor R.E."/>
            <person name="Corby N.R."/>
            <person name="Coulson A."/>
            <person name="Coville G.J."/>
            <person name="Deadman R."/>
            <person name="Dhami P.D."/>
            <person name="Dunn M."/>
            <person name="Ellington A.G."/>
            <person name="Frankland J.A."/>
            <person name="Fraser A."/>
            <person name="French L."/>
            <person name="Garner P."/>
            <person name="Grafham D.V."/>
            <person name="Griffiths C."/>
            <person name="Griffiths M.N.D."/>
            <person name="Gwilliam R."/>
            <person name="Hall R.E."/>
            <person name="Hammond S."/>
            <person name="Harley J.L."/>
            <person name="Heath P.D."/>
            <person name="Ho S."/>
            <person name="Holden J.L."/>
            <person name="Howden P.J."/>
            <person name="Huckle E."/>
            <person name="Hunt A.R."/>
            <person name="Hunt S.E."/>
            <person name="Jekosch K."/>
            <person name="Johnson C.M."/>
            <person name="Johnson D."/>
            <person name="Kay M.P."/>
            <person name="Kimberley A.M."/>
            <person name="King A."/>
            <person name="Knights A."/>
            <person name="Laird G.K."/>
            <person name="Lawlor S."/>
            <person name="Lehvaeslaiho M.H."/>
            <person name="Leversha M.A."/>
            <person name="Lloyd C."/>
            <person name="Lloyd D.M."/>
            <person name="Lovell J.D."/>
            <person name="Marsh V.L."/>
            <person name="Martin S.L."/>
            <person name="McConnachie L.J."/>
            <person name="McLay K."/>
            <person name="McMurray A.A."/>
            <person name="Milne S.A."/>
            <person name="Mistry D."/>
            <person name="Moore M.J.F."/>
            <person name="Mullikin J.C."/>
            <person name="Nickerson T."/>
            <person name="Oliver K."/>
            <person name="Parker A."/>
            <person name="Patel R."/>
            <person name="Pearce T.A.V."/>
            <person name="Peck A.I."/>
            <person name="Phillimore B.J.C.T."/>
            <person name="Prathalingam S.R."/>
            <person name="Plumb R.W."/>
            <person name="Ramsay H."/>
            <person name="Rice C.M."/>
            <person name="Ross M.T."/>
            <person name="Scott C.E."/>
            <person name="Sehra H.K."/>
            <person name="Shownkeen R."/>
            <person name="Sims S."/>
            <person name="Skuce C.D."/>
            <person name="Smith M.L."/>
            <person name="Soderlund C."/>
            <person name="Steward C.A."/>
            <person name="Sulston J.E."/>
            <person name="Swann R.M."/>
            <person name="Sycamore N."/>
            <person name="Taylor R."/>
            <person name="Tee L."/>
            <person name="Thomas D.W."/>
            <person name="Thorpe A."/>
            <person name="Tracey A."/>
            <person name="Tromans A.C."/>
            <person name="Vaudin M."/>
            <person name="Wall M."/>
            <person name="Wallis J.M."/>
            <person name="Whitehead S.L."/>
            <person name="Whittaker P."/>
            <person name="Willey D.L."/>
            <person name="Williams L."/>
            <person name="Williams S.A."/>
            <person name="Wilming L."/>
            <person name="Wray P.W."/>
            <person name="Hubbard T."/>
            <person name="Durbin R.M."/>
            <person name="Bentley D.R."/>
            <person name="Beck S."/>
            <person name="Rogers J."/>
        </authorList>
    </citation>
    <scope>NUCLEOTIDE SEQUENCE [LARGE SCALE GENOMIC DNA]</scope>
</reference>
<reference key="5">
    <citation type="journal article" date="2004" name="Nat. Genet.">
        <title>Complete sequencing and characterization of 21,243 full-length human cDNAs.</title>
        <authorList>
            <person name="Ota T."/>
            <person name="Suzuki Y."/>
            <person name="Nishikawa T."/>
            <person name="Otsuki T."/>
            <person name="Sugiyama T."/>
            <person name="Irie R."/>
            <person name="Wakamatsu A."/>
            <person name="Hayashi K."/>
            <person name="Sato H."/>
            <person name="Nagai K."/>
            <person name="Kimura K."/>
            <person name="Makita H."/>
            <person name="Sekine M."/>
            <person name="Obayashi M."/>
            <person name="Nishi T."/>
            <person name="Shibahara T."/>
            <person name="Tanaka T."/>
            <person name="Ishii S."/>
            <person name="Yamamoto J."/>
            <person name="Saito K."/>
            <person name="Kawai Y."/>
            <person name="Isono Y."/>
            <person name="Nakamura Y."/>
            <person name="Nagahari K."/>
            <person name="Murakami K."/>
            <person name="Yasuda T."/>
            <person name="Iwayanagi T."/>
            <person name="Wagatsuma M."/>
            <person name="Shiratori A."/>
            <person name="Sudo H."/>
            <person name="Hosoiri T."/>
            <person name="Kaku Y."/>
            <person name="Kodaira H."/>
            <person name="Kondo H."/>
            <person name="Sugawara M."/>
            <person name="Takahashi M."/>
            <person name="Kanda K."/>
            <person name="Yokoi T."/>
            <person name="Furuya T."/>
            <person name="Kikkawa E."/>
            <person name="Omura Y."/>
            <person name="Abe K."/>
            <person name="Kamihara K."/>
            <person name="Katsuta N."/>
            <person name="Sato K."/>
            <person name="Tanikawa M."/>
            <person name="Yamazaki M."/>
            <person name="Ninomiya K."/>
            <person name="Ishibashi T."/>
            <person name="Yamashita H."/>
            <person name="Murakawa K."/>
            <person name="Fujimori K."/>
            <person name="Tanai H."/>
            <person name="Kimata M."/>
            <person name="Watanabe M."/>
            <person name="Hiraoka S."/>
            <person name="Chiba Y."/>
            <person name="Ishida S."/>
            <person name="Ono Y."/>
            <person name="Takiguchi S."/>
            <person name="Watanabe S."/>
            <person name="Yosida M."/>
            <person name="Hotuta T."/>
            <person name="Kusano J."/>
            <person name="Kanehori K."/>
            <person name="Takahashi-Fujii A."/>
            <person name="Hara H."/>
            <person name="Tanase T.-O."/>
            <person name="Nomura Y."/>
            <person name="Togiya S."/>
            <person name="Komai F."/>
            <person name="Hara R."/>
            <person name="Takeuchi K."/>
            <person name="Arita M."/>
            <person name="Imose N."/>
            <person name="Musashino K."/>
            <person name="Yuuki H."/>
            <person name="Oshima A."/>
            <person name="Sasaki N."/>
            <person name="Aotsuka S."/>
            <person name="Yoshikawa Y."/>
            <person name="Matsunawa H."/>
            <person name="Ichihara T."/>
            <person name="Shiohata N."/>
            <person name="Sano S."/>
            <person name="Moriya S."/>
            <person name="Momiyama H."/>
            <person name="Satoh N."/>
            <person name="Takami S."/>
            <person name="Terashima Y."/>
            <person name="Suzuki O."/>
            <person name="Nakagawa S."/>
            <person name="Senoh A."/>
            <person name="Mizoguchi H."/>
            <person name="Goto Y."/>
            <person name="Shimizu F."/>
            <person name="Wakebe H."/>
            <person name="Hishigaki H."/>
            <person name="Watanabe T."/>
            <person name="Sugiyama A."/>
            <person name="Takemoto M."/>
            <person name="Kawakami B."/>
            <person name="Yamazaki M."/>
            <person name="Watanabe K."/>
            <person name="Kumagai A."/>
            <person name="Itakura S."/>
            <person name="Fukuzumi Y."/>
            <person name="Fujimori Y."/>
            <person name="Komiyama M."/>
            <person name="Tashiro H."/>
            <person name="Tanigami A."/>
            <person name="Fujiwara T."/>
            <person name="Ono T."/>
            <person name="Yamada K."/>
            <person name="Fujii Y."/>
            <person name="Ozaki K."/>
            <person name="Hirao M."/>
            <person name="Ohmori Y."/>
            <person name="Kawabata A."/>
            <person name="Hikiji T."/>
            <person name="Kobatake N."/>
            <person name="Inagaki H."/>
            <person name="Ikema Y."/>
            <person name="Okamoto S."/>
            <person name="Okitani R."/>
            <person name="Kawakami T."/>
            <person name="Noguchi S."/>
            <person name="Itoh T."/>
            <person name="Shigeta K."/>
            <person name="Senba T."/>
            <person name="Matsumura K."/>
            <person name="Nakajima Y."/>
            <person name="Mizuno T."/>
            <person name="Morinaga M."/>
            <person name="Sasaki M."/>
            <person name="Togashi T."/>
            <person name="Oyama M."/>
            <person name="Hata H."/>
            <person name="Watanabe M."/>
            <person name="Komatsu T."/>
            <person name="Mizushima-Sugano J."/>
            <person name="Satoh T."/>
            <person name="Shirai Y."/>
            <person name="Takahashi Y."/>
            <person name="Nakagawa K."/>
            <person name="Okumura K."/>
            <person name="Nagase T."/>
            <person name="Nomura N."/>
            <person name="Kikuchi H."/>
            <person name="Masuho Y."/>
            <person name="Yamashita R."/>
            <person name="Nakai K."/>
            <person name="Yada T."/>
            <person name="Nakamura Y."/>
            <person name="Ohara O."/>
            <person name="Isogai T."/>
            <person name="Sugano S."/>
        </authorList>
    </citation>
    <scope>NUCLEOTIDE SEQUENCE [LARGE SCALE MRNA] OF 358-950 (ISOFORMS 1/2)</scope>
    <source>
        <tissue>Colon</tissue>
    </source>
</reference>
<reference key="6">
    <citation type="journal article" date="2004" name="Genome Res.">
        <title>The status, quality, and expansion of the NIH full-length cDNA project: the Mammalian Gene Collection (MGC).</title>
        <authorList>
            <consortium name="The MGC Project Team"/>
        </authorList>
    </citation>
    <scope>NUCLEOTIDE SEQUENCE [LARGE SCALE MRNA] OF 371-950 (ISOFORMS 1/2)</scope>
    <source>
        <tissue>Colon</tissue>
    </source>
</reference>
<reference key="7">
    <citation type="journal article" date="2002" name="Mol. Biol. Cell">
        <title>Functional proteomic analysis of human nucleolus.</title>
        <authorList>
            <person name="Scherl A."/>
            <person name="Coute Y."/>
            <person name="Deon C."/>
            <person name="Calle A."/>
            <person name="Kindbeiter K."/>
            <person name="Sanchez J.-C."/>
            <person name="Greco A."/>
            <person name="Hochstrasser D.F."/>
            <person name="Diaz J.-J."/>
        </authorList>
    </citation>
    <scope>SUBCELLULAR LOCATION [LARGE SCALE ANALYSIS]</scope>
    <source>
        <tissue>Cervix carcinoma</tissue>
    </source>
</reference>
<reference key="8">
    <citation type="journal article" date="2004" name="Nature">
        <title>Human 5' -&gt; 3' exonuclease Xrn2 promotes transcription termination at co-transcriptional cleavage sites.</title>
        <authorList>
            <person name="West S."/>
            <person name="Gromak N."/>
            <person name="Proudfoot N.J."/>
        </authorList>
    </citation>
    <scope>FUNCTION</scope>
</reference>
<reference key="9">
    <citation type="journal article" date="2006" name="Cell">
        <title>Global, in vivo, and site-specific phosphorylation dynamics in signaling networks.</title>
        <authorList>
            <person name="Olsen J.V."/>
            <person name="Blagoev B."/>
            <person name="Gnad F."/>
            <person name="Macek B."/>
            <person name="Kumar C."/>
            <person name="Mortensen P."/>
            <person name="Mann M."/>
        </authorList>
    </citation>
    <scope>PHOSPHORYLATION [LARGE SCALE ANALYSIS] AT SER-448; SER-499 AND SER-501</scope>
    <scope>IDENTIFICATION BY MASS SPECTROMETRY [LARGE SCALE ANALYSIS]</scope>
    <source>
        <tissue>Cervix carcinoma</tissue>
    </source>
</reference>
<reference key="10">
    <citation type="journal article" date="2006" name="Mol. Cell. Biol.">
        <title>Pause sites promote transcriptional termination of mammalian RNA polymerase II.</title>
        <authorList>
            <person name="Gromak N."/>
            <person name="West S."/>
            <person name="Proudfoot N.J."/>
        </authorList>
    </citation>
    <scope>FUNCTION</scope>
</reference>
<reference key="11">
    <citation type="journal article" date="2006" name="Nat. Biotechnol.">
        <title>A probability-based approach for high-throughput protein phosphorylation analysis and site localization.</title>
        <authorList>
            <person name="Beausoleil S.A."/>
            <person name="Villen J."/>
            <person name="Gerber S.A."/>
            <person name="Rush J."/>
            <person name="Gygi S.P."/>
        </authorList>
    </citation>
    <scope>PHOSPHORYLATION [LARGE SCALE ANALYSIS] AT SER-448</scope>
    <scope>IDENTIFICATION BY MASS SPECTROMETRY [LARGE SCALE ANALYSIS]</scope>
    <source>
        <tissue>Cervix carcinoma</tissue>
    </source>
</reference>
<reference key="12">
    <citation type="journal article" date="2007" name="J. Proteome Res.">
        <title>Improved titanium dioxide enrichment of phosphopeptides from HeLa cells and high confident phosphopeptide identification by cross-validation of MS/MS and MS/MS/MS spectra.</title>
        <authorList>
            <person name="Yu L.R."/>
            <person name="Zhu Z."/>
            <person name="Chan K.C."/>
            <person name="Issaq H.J."/>
            <person name="Dimitrov D.S."/>
            <person name="Veenstra T.D."/>
        </authorList>
    </citation>
    <scope>PHOSPHORYLATION [LARGE SCALE ANALYSIS] AT SER-448</scope>
    <scope>IDENTIFICATION BY MASS SPECTROMETRY [LARGE SCALE ANALYSIS]</scope>
    <source>
        <tissue>Cervix carcinoma</tissue>
    </source>
</reference>
<reference key="13">
    <citation type="journal article" date="2008" name="Mol. Cell">
        <title>Kinase-selective enrichment enables quantitative phosphoproteomics of the kinome across the cell cycle.</title>
        <authorList>
            <person name="Daub H."/>
            <person name="Olsen J.V."/>
            <person name="Bairlein M."/>
            <person name="Gnad F."/>
            <person name="Oppermann F.S."/>
            <person name="Korner R."/>
            <person name="Greff Z."/>
            <person name="Keri G."/>
            <person name="Stemmann O."/>
            <person name="Mann M."/>
        </authorList>
    </citation>
    <scope>PHOSPHORYLATION [LARGE SCALE ANALYSIS] AT SER-448</scope>
    <scope>IDENTIFICATION BY MASS SPECTROMETRY [LARGE SCALE ANALYSIS]</scope>
    <source>
        <tissue>Cervix carcinoma</tissue>
    </source>
</reference>
<reference key="14">
    <citation type="journal article" date="2008" name="Proc. Natl. Acad. Sci. U.S.A.">
        <title>A quantitative atlas of mitotic phosphorylation.</title>
        <authorList>
            <person name="Dephoure N."/>
            <person name="Zhou C."/>
            <person name="Villen J."/>
            <person name="Beausoleil S.A."/>
            <person name="Bakalarski C.E."/>
            <person name="Elledge S.J."/>
            <person name="Gygi S.P."/>
        </authorList>
    </citation>
    <scope>PHOSPHORYLATION [LARGE SCALE ANALYSIS] AT THR-439 AND SER-448</scope>
    <scope>IDENTIFICATION BY MASS SPECTROMETRY [LARGE SCALE ANALYSIS]</scope>
    <source>
        <tissue>Cervix carcinoma</tissue>
    </source>
</reference>
<reference key="15">
    <citation type="journal article" date="2008" name="Proteomics">
        <title>Large-scale phosphoproteome analysis of human liver tissue by enrichment and fractionation of phosphopeptides with strong anion exchange chromatography.</title>
        <authorList>
            <person name="Han G."/>
            <person name="Ye M."/>
            <person name="Zhou H."/>
            <person name="Jiang X."/>
            <person name="Feng S."/>
            <person name="Jiang X."/>
            <person name="Tian R."/>
            <person name="Wan D."/>
            <person name="Zou H."/>
            <person name="Gu J."/>
        </authorList>
    </citation>
    <scope>PHOSPHORYLATION [LARGE SCALE ANALYSIS] AT SER-499 AND SER-501</scope>
    <scope>IDENTIFICATION BY MASS SPECTROMETRY [LARGE SCALE ANALYSIS]</scope>
    <source>
        <tissue>Liver</tissue>
    </source>
</reference>
<reference key="16">
    <citation type="journal article" date="2009" name="Anal. Chem.">
        <title>Lys-N and trypsin cover complementary parts of the phosphoproteome in a refined SCX-based approach.</title>
        <authorList>
            <person name="Gauci S."/>
            <person name="Helbig A.O."/>
            <person name="Slijper M."/>
            <person name="Krijgsveld J."/>
            <person name="Heck A.J."/>
            <person name="Mohammed S."/>
        </authorList>
    </citation>
    <scope>IDENTIFICATION BY MASS SPECTROMETRY [LARGE SCALE ANALYSIS]</scope>
</reference>
<reference key="17">
    <citation type="journal article" date="2009" name="Mol. Cell. Proteomics">
        <title>Large-scale proteomics analysis of the human kinome.</title>
        <authorList>
            <person name="Oppermann F.S."/>
            <person name="Gnad F."/>
            <person name="Olsen J.V."/>
            <person name="Hornberger R."/>
            <person name="Greff Z."/>
            <person name="Keri G."/>
            <person name="Mann M."/>
            <person name="Daub H."/>
        </authorList>
    </citation>
    <scope>PHOSPHORYLATION [LARGE SCALE ANALYSIS] AT SER-448; SER-499 AND SER-501</scope>
    <scope>IDENTIFICATION BY MASS SPECTROMETRY [LARGE SCALE ANALYSIS]</scope>
</reference>
<reference key="18">
    <citation type="journal article" date="2009" name="Sci. Signal.">
        <title>Quantitative phosphoproteomic analysis of T cell receptor signaling reveals system-wide modulation of protein-protein interactions.</title>
        <authorList>
            <person name="Mayya V."/>
            <person name="Lundgren D.H."/>
            <person name="Hwang S.-I."/>
            <person name="Rezaul K."/>
            <person name="Wu L."/>
            <person name="Eng J.K."/>
            <person name="Rodionov V."/>
            <person name="Han D.K."/>
        </authorList>
    </citation>
    <scope>PHOSPHORYLATION [LARGE SCALE ANALYSIS] AT SER-448; SER-471; SER-473; SER-475 AND SER-499</scope>
    <scope>IDENTIFICATION BY MASS SPECTROMETRY [LARGE SCALE ANALYSIS]</scope>
    <source>
        <tissue>Leukemic T-cell</tissue>
    </source>
</reference>
<reference key="19">
    <citation type="journal article" date="2010" name="Sci. Signal.">
        <title>Quantitative phosphoproteomics reveals widespread full phosphorylation site occupancy during mitosis.</title>
        <authorList>
            <person name="Olsen J.V."/>
            <person name="Vermeulen M."/>
            <person name="Santamaria A."/>
            <person name="Kumar C."/>
            <person name="Miller M.L."/>
            <person name="Jensen L.J."/>
            <person name="Gnad F."/>
            <person name="Cox J."/>
            <person name="Jensen T.S."/>
            <person name="Nigg E.A."/>
            <person name="Brunak S."/>
            <person name="Mann M."/>
        </authorList>
    </citation>
    <scope>PHOSPHORYLATION [LARGE SCALE ANALYSIS] AT SER-448; SER-499 AND SER-501</scope>
    <scope>IDENTIFICATION BY MASS SPECTROMETRY [LARGE SCALE ANALYSIS]</scope>
    <source>
        <tissue>Cervix carcinoma</tissue>
    </source>
</reference>
<reference key="20">
    <citation type="journal article" date="2011" name="BMC Syst. Biol.">
        <title>Initial characterization of the human central proteome.</title>
        <authorList>
            <person name="Burkard T.R."/>
            <person name="Planyavsky M."/>
            <person name="Kaupe I."/>
            <person name="Breitwieser F.P."/>
            <person name="Buerckstuemmer T."/>
            <person name="Bennett K.L."/>
            <person name="Superti-Furga G."/>
            <person name="Colinge J."/>
        </authorList>
    </citation>
    <scope>IDENTIFICATION BY MASS SPECTROMETRY [LARGE SCALE ANALYSIS]</scope>
</reference>
<reference key="21">
    <citation type="journal article" date="2011" name="Mol. Cell">
        <title>Human senataxin resolves RNA/DNA hybrids formed at transcriptional pause sites to promote Xrn2-dependent termination.</title>
        <authorList>
            <person name="Skourti-Stathaki K."/>
            <person name="Proudfoot N.J."/>
            <person name="Gromak N."/>
        </authorList>
    </citation>
    <scope>FUNCTION</scope>
    <scope>DNA-BINDING</scope>
</reference>
<reference key="22">
    <citation type="journal article" date="2011" name="Sci. Signal.">
        <title>System-wide temporal characterization of the proteome and phosphoproteome of human embryonic stem cell differentiation.</title>
        <authorList>
            <person name="Rigbolt K.T."/>
            <person name="Prokhorova T.A."/>
            <person name="Akimov V."/>
            <person name="Henningsen J."/>
            <person name="Johansen P.T."/>
            <person name="Kratchmarova I."/>
            <person name="Kassem M."/>
            <person name="Mann M."/>
            <person name="Olsen J.V."/>
            <person name="Blagoev B."/>
        </authorList>
    </citation>
    <scope>PHOSPHORYLATION [LARGE SCALE ANALYSIS] AT SER-448; SER-499 AND SER-501</scope>
    <scope>IDENTIFICATION BY MASS SPECTROMETRY [LARGE SCALE ANALYSIS]</scope>
</reference>
<reference key="23">
    <citation type="journal article" date="2013" name="J. Proteome Res.">
        <title>Toward a comprehensive characterization of a human cancer cell phosphoproteome.</title>
        <authorList>
            <person name="Zhou H."/>
            <person name="Di Palma S."/>
            <person name="Preisinger C."/>
            <person name="Peng M."/>
            <person name="Polat A.N."/>
            <person name="Heck A.J."/>
            <person name="Mohammed S."/>
        </authorList>
    </citation>
    <scope>PHOSPHORYLATION [LARGE SCALE ANALYSIS] AT THR-439; SER-448; SER-487; SER-499; SER-501 AND SER-678</scope>
    <scope>IDENTIFICATION BY MASS SPECTROMETRY [LARGE SCALE ANALYSIS]</scope>
    <source>
        <tissue>Cervix carcinoma</tissue>
        <tissue>Erythroleukemia</tissue>
    </source>
</reference>
<reference key="24">
    <citation type="journal article" date="2013" name="Nucleic Acids Res.">
        <title>The mammalian TRIM-NHL protein TRIM71/LIN-41 is a repressor of mRNA function.</title>
        <authorList>
            <person name="Loedige I."/>
            <person name="Gaidatzis D."/>
            <person name="Sack R."/>
            <person name="Meister G."/>
            <person name="Filipowicz W."/>
        </authorList>
    </citation>
    <scope>INTERACTION WITH TRIM71</scope>
</reference>
<reference key="25">
    <citation type="journal article" date="2014" name="Cell Rep.">
        <title>The RNA helicase DHX34 activates NMD by promoting a transition from the surveillance to the decay-inducing complex.</title>
        <authorList>
            <person name="Hug N."/>
            <person name="Caceres J.F."/>
        </authorList>
    </citation>
    <scope>INTERACTION WITH DHX34</scope>
</reference>
<reference key="26">
    <citation type="journal article" date="2014" name="J. Proteomics">
        <title>An enzyme assisted RP-RPLC approach for in-depth analysis of human liver phosphoproteome.</title>
        <authorList>
            <person name="Bian Y."/>
            <person name="Song C."/>
            <person name="Cheng K."/>
            <person name="Dong M."/>
            <person name="Wang F."/>
            <person name="Huang J."/>
            <person name="Sun D."/>
            <person name="Wang L."/>
            <person name="Ye M."/>
            <person name="Zou H."/>
        </authorList>
    </citation>
    <scope>PHOSPHORYLATION [LARGE SCALE ANALYSIS] AT THR-439; SER-448; SER-499 AND SER-501</scope>
    <scope>IDENTIFICATION BY MASS SPECTROMETRY [LARGE SCALE ANALYSIS]</scope>
    <source>
        <tissue>Liver</tissue>
    </source>
</reference>
<reference key="27">
    <citation type="journal article" date="2014" name="Mol. Cell">
        <title>PAXT-1 promotes XRN2 activity by stabilizing it through a conserved domain.</title>
        <authorList>
            <person name="Miki T.S."/>
            <person name="Richter H."/>
            <person name="Rueegger S."/>
            <person name="Grosshans H."/>
        </authorList>
    </citation>
    <scope>INTERACTION WITH CDKN2AIP AND NKRF</scope>
</reference>
<reference key="28">
    <citation type="journal article" date="2014" name="Mol. Cell. Proteomics">
        <title>Immunoaffinity enrichment and mass spectrometry analysis of protein methylation.</title>
        <authorList>
            <person name="Guo A."/>
            <person name="Gu H."/>
            <person name="Zhou J."/>
            <person name="Mulhern D."/>
            <person name="Wang Y."/>
            <person name="Lee K.A."/>
            <person name="Yang V."/>
            <person name="Aguiar M."/>
            <person name="Kornhauser J."/>
            <person name="Jia X."/>
            <person name="Ren J."/>
            <person name="Beausoleil S.A."/>
            <person name="Silva J.C."/>
            <person name="Vemulapalli V."/>
            <person name="Bedford M.T."/>
            <person name="Comb M.J."/>
        </authorList>
    </citation>
    <scope>METHYLATION [LARGE SCALE ANALYSIS] AT ARG-824; ARG-847; ARG-851; ARG-883; ARG-895 AND ARG-946</scope>
    <scope>IDENTIFICATION BY MASS SPECTROMETRY [LARGE SCALE ANALYSIS]</scope>
    <source>
        <tissue>Colon carcinoma</tissue>
    </source>
</reference>
<reference key="29">
    <citation type="journal article" date="2016" name="Nature">
        <title>SMN and symmetric arginine dimethylation of RNA polymerase II C-terminal domain control termination.</title>
        <authorList>
            <person name="Yanling Zhao D."/>
            <person name="Gish G."/>
            <person name="Braunschweig U."/>
            <person name="Li Y."/>
            <person name="Ni Z."/>
            <person name="Schmitges F.W."/>
            <person name="Zhong G."/>
            <person name="Liu K."/>
            <person name="Li W."/>
            <person name="Moffat J."/>
            <person name="Vedadi M."/>
            <person name="Min J."/>
            <person name="Pawson T.J."/>
            <person name="Blencowe B.J."/>
            <person name="Greenblatt J.F."/>
        </authorList>
    </citation>
    <scope>INTERACTION WITH POLR2A AND SMN1</scope>
</reference>
<reference key="30">
    <citation type="journal article" date="2016" name="Nat. Struct. Mol. Biol.">
        <title>Structural basis and function of XRN2 binding by XTB domains.</title>
        <authorList>
            <person name="Richter H."/>
            <person name="Katic I."/>
            <person name="Gut H."/>
            <person name="Grosshans H."/>
        </authorList>
    </citation>
    <scope>INTERACTION WITH CDKN2AIPNL</scope>
</reference>
<organism>
    <name type="scientific">Homo sapiens</name>
    <name type="common">Human</name>
    <dbReference type="NCBI Taxonomy" id="9606"/>
    <lineage>
        <taxon>Eukaryota</taxon>
        <taxon>Metazoa</taxon>
        <taxon>Chordata</taxon>
        <taxon>Craniata</taxon>
        <taxon>Vertebrata</taxon>
        <taxon>Euteleostomi</taxon>
        <taxon>Mammalia</taxon>
        <taxon>Eutheria</taxon>
        <taxon>Euarchontoglires</taxon>
        <taxon>Primates</taxon>
        <taxon>Haplorrhini</taxon>
        <taxon>Catarrhini</taxon>
        <taxon>Hominidae</taxon>
        <taxon>Homo</taxon>
    </lineage>
</organism>
<sequence length="950" mass="108582">MGVPAFFRWLSRKYPSIIVNCVEEKPKECNGVKIPVDASKPNPNDVEFDNLYLDMNGIIHPCTHPEDKPAPKNEDEMMVAIFEYIDRLFSIVRPRRLLYMAIDGVAPRAKMNQQRSRRFRASKEGMEAAVEKQRVREEILAKGGFLPPEEIKERFDSNCITPGTEFMDNLAKCLRYYIADRLNNDPGWKNLTVILSDASAPGEGEHKIMDYIRRQRAQPNHDPNTHHCLCGADADLIMLGLATHEPNFTIIREEFKPNKPKPCGLCNQFGHEVKDCEGLPREKKGKHDELADSLPCAEGEFIFLRLNVLREYLERELTMASLPFTFDVERSIDDWVFMCFFVGNDFLPHLPSLEIRENAIDRLVNIYKNVVHKTGGYLTESGYVNLQRVQMIMLAVGEVEDSIFKKRKDDEDSFRRRQKEKRKRMKRDQPAFTPSGILTPHALGSRNSPGSQVASNPRQAAYEMRMQNNSSPSISPNTSFTSDGSPSPLGGIKRKAEDSDSEPEPEDNVRLWEAGWKQRYYKNKFDVDAADEKFRRKVVQSYVEGLCWVLRYYYQGCASWKWYYPFHYAPFASDFEGIADMPSDFEKGTKPFKPLEQLMGVFPAASGNFLPPSWRKLMSDPDSSIIDFYPEDFAIDLNGKKYAWQGVALLPFVDERRLRAALEEVYPDLTPEETRRNSLGGDVLFVGKHHPLHDFILELYQTGSTEPVEVPPELCHGIQGKFSLDEEAILPDQIVCSPVPMLRDLTQNTVVSINFKDPQFAEDYIFKAVMLPGARKPAAVLKPSDWEKSSNGRQWKPQLGFNRDRRPVHLDQAAFRTLGHVMPRGSGTGIYSNAAPPPVTYQGNLYRPLLRGQAQIPKLMSNMRPQDSWRGPPPLFQQQRFDRGVGAEPLLPWNRMLQTQNAAFQPNQYQMLAGPGGYPPRRDDRGGRQGYPREGRKYPLPPPSGRYNWN</sequence>
<gene>
    <name type="primary">XRN2</name>
</gene>
<evidence type="ECO:0000250" key="1"/>
<evidence type="ECO:0000250" key="2">
    <source>
        <dbReference type="UniProtKB" id="Q9DBR1"/>
    </source>
</evidence>
<evidence type="ECO:0000256" key="3">
    <source>
        <dbReference type="SAM" id="MobiDB-lite"/>
    </source>
</evidence>
<evidence type="ECO:0000269" key="4">
    <source>
    </source>
</evidence>
<evidence type="ECO:0000269" key="5">
    <source>
    </source>
</evidence>
<evidence type="ECO:0000269" key="6">
    <source>
    </source>
</evidence>
<evidence type="ECO:0000269" key="7">
    <source>
    </source>
</evidence>
<evidence type="ECO:0000269" key="8">
    <source>
    </source>
</evidence>
<evidence type="ECO:0000269" key="9">
    <source>
    </source>
</evidence>
<evidence type="ECO:0000269" key="10">
    <source>
    </source>
</evidence>
<evidence type="ECO:0000269" key="11">
    <source>
    </source>
</evidence>
<evidence type="ECO:0000269" key="12">
    <source>
    </source>
</evidence>
<evidence type="ECO:0000269" key="13">
    <source>
    </source>
</evidence>
<evidence type="ECO:0000269" key="14">
    <source>
    </source>
</evidence>
<evidence type="ECO:0000303" key="15">
    <source>
    </source>
</evidence>
<evidence type="ECO:0000305" key="16"/>
<evidence type="ECO:0007744" key="17">
    <source>
    </source>
</evidence>
<evidence type="ECO:0007744" key="18">
    <source>
    </source>
</evidence>
<evidence type="ECO:0007744" key="19">
    <source>
    </source>
</evidence>
<evidence type="ECO:0007744" key="20">
    <source>
    </source>
</evidence>
<evidence type="ECO:0007744" key="21">
    <source>
    </source>
</evidence>
<evidence type="ECO:0007744" key="22">
    <source>
    </source>
</evidence>
<evidence type="ECO:0007744" key="23">
    <source>
    </source>
</evidence>
<evidence type="ECO:0007744" key="24">
    <source>
    </source>
</evidence>
<evidence type="ECO:0007744" key="25">
    <source>
    </source>
</evidence>
<evidence type="ECO:0007744" key="26">
    <source>
    </source>
</evidence>
<evidence type="ECO:0007744" key="27">
    <source>
    </source>
</evidence>
<evidence type="ECO:0007744" key="28">
    <source>
    </source>
</evidence>
<evidence type="ECO:0007744" key="29">
    <source>
    </source>
</evidence>
<name>XRN2_HUMAN</name>
<comment type="function">
    <text evidence="1 6 8 9">Possesses 5'-&gt;3' exoribonuclease activity (By similarity). May promote the termination of transcription by RNA polymerase II. During transcription termination, cleavage at the polyadenylation site liberates a 5' fragment which is subsequently processed to form the mature mRNA and a 3' fragment which remains attached to the elongating polymerase. The processive degradation of this 3' fragment by this protein may promote termination of transcription. Binds to RNA polymerase II (RNAp II) transcription termination R-loops formed by G-rich pause sites (PubMed:21700224).</text>
</comment>
<comment type="subunit">
    <text evidence="10 11 12 13 14">Interacts with POLR2A and SMN1/SMN2 (PubMed:26700805). Interacts with CDKN2AIP and NKRF (PubMed:24462208). Interacts with CDKN2AIPNL; the interaction is direct (PubMed:26779609). Interacts with TRIM71 (via NHL repeats) in an RNA-dependent manner (PubMed:23125361). Interacts with DHX34; the interaction is RNA-independent (PubMed:25220460).</text>
</comment>
<comment type="interaction">
    <interactant intactId="EBI-372110">
        <id>Q9H0D6</id>
    </interactant>
    <interactant intactId="EBI-2559836">
        <id>Q9NXV6</id>
        <label>CDKN2AIP</label>
    </interactant>
    <organismsDiffer>false</organismsDiffer>
    <experiments>7</experiments>
</comment>
<comment type="interaction">
    <interactant intactId="EBI-372110">
        <id>Q9H0D6</id>
    </interactant>
    <interactant intactId="EBI-10038935">
        <id>Q96HQ2</id>
        <label>CDKN2AIPNL</label>
    </interactant>
    <organismsDiffer>false</organismsDiffer>
    <experiments>4</experiments>
</comment>
<comment type="interaction">
    <interactant intactId="EBI-372110">
        <id>Q9H0D6</id>
    </interactant>
    <interactant intactId="EBI-2212355">
        <id>Q49AN0</id>
        <label>CRY2</label>
    </interactant>
    <organismsDiffer>false</organismsDiffer>
    <experiments>3</experiments>
</comment>
<comment type="interaction">
    <interactant intactId="EBI-372110">
        <id>Q9H0D6</id>
    </interactant>
    <interactant intactId="EBI-529989">
        <id>Q9NRI5</id>
        <label>DISC1</label>
    </interactant>
    <organismsDiffer>false</organismsDiffer>
    <experiments>3</experiments>
</comment>
<comment type="interaction">
    <interactant intactId="EBI-372110">
        <id>Q9H0D6</id>
    </interactant>
    <interactant intactId="EBI-11911016">
        <id>P80188</id>
        <label>LCN2</label>
    </interactant>
    <organismsDiffer>false</organismsDiffer>
    <experiments>3</experiments>
</comment>
<comment type="interaction">
    <interactant intactId="EBI-372110">
        <id>Q9H0D6</id>
    </interactant>
    <interactant intactId="EBI-742388">
        <id>Q9H8W4</id>
        <label>PLEKHF2</label>
    </interactant>
    <organismsDiffer>false</organismsDiffer>
    <experiments>3</experiments>
</comment>
<comment type="interaction">
    <interactant intactId="EBI-372110">
        <id>Q9H0D6</id>
    </interactant>
    <interactant intactId="EBI-372899">
        <id>Q13148</id>
        <label>TARDBP</label>
    </interactant>
    <organismsDiffer>false</organismsDiffer>
    <experiments>7</experiments>
</comment>
<comment type="interaction">
    <interactant intactId="EBI-372110">
        <id>Q9H0D6</id>
    </interactant>
    <interactant intactId="EBI-9090990">
        <id>Q5W5X9-3</id>
        <label>TTC23</label>
    </interactant>
    <organismsDiffer>false</organismsDiffer>
    <experiments>3</experiments>
</comment>
<comment type="interaction">
    <interactant intactId="EBI-372110">
        <id>Q9H0D6</id>
    </interactant>
    <interactant intactId="EBI-372110">
        <id>Q9H0D6</id>
        <label>XRN2</label>
    </interactant>
    <organismsDiffer>false</organismsDiffer>
    <experiments>3</experiments>
</comment>
<comment type="subcellular location">
    <subcellularLocation>
        <location evidence="5">Nucleus</location>
        <location evidence="5">Nucleolus</location>
    </subcellularLocation>
</comment>
<comment type="alternative products">
    <event type="alternative splicing"/>
    <isoform>
        <id>Q9H0D6-1</id>
        <name>1</name>
        <name>XRN2a</name>
        <sequence type="displayed"/>
    </isoform>
    <isoform>
        <id>Q9H0D6-2</id>
        <name>2</name>
        <name>XRN2b</name>
        <sequence type="described" ref="VSP_020596"/>
    </isoform>
</comment>
<comment type="tissue specificity">
    <text evidence="4 7">Expressed in the spleen, thymus, prostate, testis, ovary, small intestine, colon, peripheral blood leukocytes, heart, brain, placenta, lung, liver, skeletal muscle, kidney, and pancreas. Isoform 2 is expressed predominantly in peripheral blood leukocytes.</text>
</comment>
<comment type="similarity">
    <text evidence="16">Belongs to the 5'-3' exonuclease family. XRN2/RAT1 subfamily.</text>
</comment>
<comment type="sequence caution" evidence="16">
    <conflict type="frameshift">
        <sequence resource="EMBL-CDS" id="AAR24369"/>
    </conflict>
</comment>
<comment type="sequence caution" evidence="16">
    <conflict type="erroneous initiation">
        <sequence resource="EMBL-CDS" id="BAA90934"/>
    </conflict>
    <text>Truncated N-terminus.</text>
</comment>
<dbReference type="EC" id="3.1.13.-"/>
<dbReference type="EMBL" id="AF064257">
    <property type="protein sequence ID" value="AAD55138.1"/>
    <property type="molecule type" value="mRNA"/>
</dbReference>
<dbReference type="EMBL" id="AF152169">
    <property type="protein sequence ID" value="AAQ13577.1"/>
    <property type="molecule type" value="mRNA"/>
</dbReference>
<dbReference type="EMBL" id="AY382900">
    <property type="protein sequence ID" value="AAR24369.1"/>
    <property type="status" value="ALT_FRAME"/>
    <property type="molecule type" value="mRNA"/>
</dbReference>
<dbReference type="EMBL" id="AL136841">
    <property type="protein sequence ID" value="CAB66775.1"/>
    <property type="molecule type" value="mRNA"/>
</dbReference>
<dbReference type="EMBL" id="AL117332">
    <property type="status" value="NOT_ANNOTATED_CDS"/>
    <property type="molecule type" value="Genomic_DNA"/>
</dbReference>
<dbReference type="EMBL" id="AL158013">
    <property type="status" value="NOT_ANNOTATED_CDS"/>
    <property type="molecule type" value="Genomic_DNA"/>
</dbReference>
<dbReference type="EMBL" id="AK000084">
    <property type="protein sequence ID" value="BAA90934.1"/>
    <property type="status" value="ALT_INIT"/>
    <property type="molecule type" value="mRNA"/>
</dbReference>
<dbReference type="EMBL" id="BC006417">
    <property type="protein sequence ID" value="AAH06417.2"/>
    <property type="molecule type" value="mRNA"/>
</dbReference>
<dbReference type="CCDS" id="CCDS13144.1">
    <molecule id="Q9H0D6-1"/>
</dbReference>
<dbReference type="RefSeq" id="NP_001304889.1">
    <property type="nucleotide sequence ID" value="NM_001317960.1"/>
</dbReference>
<dbReference type="RefSeq" id="NP_036387.2">
    <molecule id="Q9H0D6-1"/>
    <property type="nucleotide sequence ID" value="NM_012255.4"/>
</dbReference>
<dbReference type="SMR" id="Q9H0D6"/>
<dbReference type="BioGRID" id="116483">
    <property type="interactions" value="394"/>
</dbReference>
<dbReference type="CORUM" id="Q9H0D6"/>
<dbReference type="DIP" id="DIP-31166N"/>
<dbReference type="FunCoup" id="Q9H0D6">
    <property type="interactions" value="4364"/>
</dbReference>
<dbReference type="IntAct" id="Q9H0D6">
    <property type="interactions" value="112"/>
</dbReference>
<dbReference type="MINT" id="Q9H0D6"/>
<dbReference type="STRING" id="9606.ENSP00000366396"/>
<dbReference type="GlyGen" id="Q9H0D6">
    <property type="glycosylation" value="2 sites, 1 N-linked glycan (1 site), 1 O-linked glycan (1 site)"/>
</dbReference>
<dbReference type="iPTMnet" id="Q9H0D6"/>
<dbReference type="MetOSite" id="Q9H0D6"/>
<dbReference type="PhosphoSitePlus" id="Q9H0D6"/>
<dbReference type="SwissPalm" id="Q9H0D6"/>
<dbReference type="BioMuta" id="XRN2"/>
<dbReference type="DMDM" id="30173484"/>
<dbReference type="jPOST" id="Q9H0D6"/>
<dbReference type="MassIVE" id="Q9H0D6"/>
<dbReference type="PaxDb" id="9606-ENSP00000366396"/>
<dbReference type="PeptideAtlas" id="Q9H0D6"/>
<dbReference type="ProteomicsDB" id="80258">
    <molecule id="Q9H0D6-1"/>
</dbReference>
<dbReference type="ProteomicsDB" id="80259">
    <molecule id="Q9H0D6-2"/>
</dbReference>
<dbReference type="Pumba" id="Q9H0D6"/>
<dbReference type="Antibodypedia" id="24812">
    <property type="antibodies" value="190 antibodies from 28 providers"/>
</dbReference>
<dbReference type="DNASU" id="22803"/>
<dbReference type="Ensembl" id="ENST00000377191.5">
    <molecule id="Q9H0D6-1"/>
    <property type="protein sequence ID" value="ENSP00000366396.3"/>
    <property type="gene ID" value="ENSG00000088930.8"/>
</dbReference>
<dbReference type="GeneID" id="22803"/>
<dbReference type="KEGG" id="hsa:22803"/>
<dbReference type="MANE-Select" id="ENST00000377191.5">
    <property type="protein sequence ID" value="ENSP00000366396.3"/>
    <property type="RefSeq nucleotide sequence ID" value="NM_012255.5"/>
    <property type="RefSeq protein sequence ID" value="NP_036387.2"/>
</dbReference>
<dbReference type="UCSC" id="uc002wsf.2">
    <molecule id="Q9H0D6-1"/>
    <property type="organism name" value="human"/>
</dbReference>
<dbReference type="AGR" id="HGNC:12836"/>
<dbReference type="CTD" id="22803"/>
<dbReference type="DisGeNET" id="22803"/>
<dbReference type="GeneCards" id="XRN2"/>
<dbReference type="HGNC" id="HGNC:12836">
    <property type="gene designation" value="XRN2"/>
</dbReference>
<dbReference type="HPA" id="ENSG00000088930">
    <property type="expression patterns" value="Low tissue specificity"/>
</dbReference>
<dbReference type="MIM" id="608851">
    <property type="type" value="gene"/>
</dbReference>
<dbReference type="neXtProt" id="NX_Q9H0D6"/>
<dbReference type="OpenTargets" id="ENSG00000088930"/>
<dbReference type="PharmGKB" id="PA37427"/>
<dbReference type="VEuPathDB" id="HostDB:ENSG00000088930"/>
<dbReference type="eggNOG" id="KOG2044">
    <property type="taxonomic scope" value="Eukaryota"/>
</dbReference>
<dbReference type="GeneTree" id="ENSGT00670000098098"/>
<dbReference type="HOGENOM" id="CLU_006038_1_2_1"/>
<dbReference type="InParanoid" id="Q9H0D6"/>
<dbReference type="OMA" id="ITHDMVV"/>
<dbReference type="OrthoDB" id="372487at2759"/>
<dbReference type="PAN-GO" id="Q9H0D6">
    <property type="GO annotations" value="4 GO annotations based on evolutionary models"/>
</dbReference>
<dbReference type="PhylomeDB" id="Q9H0D6"/>
<dbReference type="TreeFam" id="TF105977"/>
<dbReference type="BRENDA" id="3.1.13.1">
    <property type="organism ID" value="2681"/>
</dbReference>
<dbReference type="PathwayCommons" id="Q9H0D6"/>
<dbReference type="Reactome" id="R-HSA-390471">
    <property type="pathway name" value="Association of TriC/CCT with target proteins during biosynthesis"/>
</dbReference>
<dbReference type="Reactome" id="R-HSA-6791226">
    <property type="pathway name" value="Major pathway of rRNA processing in the nucleolus and cytosol"/>
</dbReference>
<dbReference type="SignaLink" id="Q9H0D6"/>
<dbReference type="SIGNOR" id="Q9H0D6"/>
<dbReference type="BioGRID-ORCS" id="22803">
    <property type="hits" value="750 hits in 1136 CRISPR screens"/>
</dbReference>
<dbReference type="CD-CODE" id="232F8A39">
    <property type="entry name" value="P-body"/>
</dbReference>
<dbReference type="CD-CODE" id="91857CE7">
    <property type="entry name" value="Nucleolus"/>
</dbReference>
<dbReference type="CD-CODE" id="DEE660B4">
    <property type="entry name" value="Stress granule"/>
</dbReference>
<dbReference type="ChiTaRS" id="XRN2">
    <property type="organism name" value="human"/>
</dbReference>
<dbReference type="GeneWiki" id="5%27-3%27_exoribonuclease_2"/>
<dbReference type="GenomeRNAi" id="22803"/>
<dbReference type="Pharos" id="Q9H0D6">
    <property type="development level" value="Tbio"/>
</dbReference>
<dbReference type="PRO" id="PR:Q9H0D6"/>
<dbReference type="Proteomes" id="UP000005640">
    <property type="component" value="Chromosome 20"/>
</dbReference>
<dbReference type="RNAct" id="Q9H0D6">
    <property type="molecule type" value="protein"/>
</dbReference>
<dbReference type="Bgee" id="ENSG00000088930">
    <property type="expression patterns" value="Expressed in monocyte and 180 other cell types or tissues"/>
</dbReference>
<dbReference type="GO" id="GO:0016235">
    <property type="term" value="C:aggresome"/>
    <property type="evidence" value="ECO:0000314"/>
    <property type="project" value="HPA"/>
</dbReference>
<dbReference type="GO" id="GO:0016020">
    <property type="term" value="C:membrane"/>
    <property type="evidence" value="ECO:0007005"/>
    <property type="project" value="UniProtKB"/>
</dbReference>
<dbReference type="GO" id="GO:0005730">
    <property type="term" value="C:nucleolus"/>
    <property type="evidence" value="ECO:0000314"/>
    <property type="project" value="HPA"/>
</dbReference>
<dbReference type="GO" id="GO:0005654">
    <property type="term" value="C:nucleoplasm"/>
    <property type="evidence" value="ECO:0000314"/>
    <property type="project" value="HPA"/>
</dbReference>
<dbReference type="GO" id="GO:0005634">
    <property type="term" value="C:nucleus"/>
    <property type="evidence" value="ECO:0000318"/>
    <property type="project" value="GO_Central"/>
</dbReference>
<dbReference type="GO" id="GO:0000175">
    <property type="term" value="F:3'-5'-RNA exonuclease activity"/>
    <property type="evidence" value="ECO:0000269"/>
    <property type="project" value="Reactome"/>
</dbReference>
<dbReference type="GO" id="GO:0008409">
    <property type="term" value="F:5'-3' exonuclease activity"/>
    <property type="evidence" value="ECO:0000314"/>
    <property type="project" value="UniProtKB"/>
</dbReference>
<dbReference type="GO" id="GO:0004534">
    <property type="term" value="F:5'-3' RNA exonuclease activity"/>
    <property type="evidence" value="ECO:0000318"/>
    <property type="project" value="GO_Central"/>
</dbReference>
<dbReference type="GO" id="GO:0042802">
    <property type="term" value="F:identical protein binding"/>
    <property type="evidence" value="ECO:0000353"/>
    <property type="project" value="IntAct"/>
</dbReference>
<dbReference type="GO" id="GO:0004518">
    <property type="term" value="F:nuclease activity"/>
    <property type="evidence" value="ECO:0000304"/>
    <property type="project" value="ProtInc"/>
</dbReference>
<dbReference type="GO" id="GO:0003723">
    <property type="term" value="F:RNA binding"/>
    <property type="evidence" value="ECO:0007005"/>
    <property type="project" value="UniProtKB"/>
</dbReference>
<dbReference type="GO" id="GO:0001147">
    <property type="term" value="F:transcription termination site sequence-specific DNA binding"/>
    <property type="evidence" value="ECO:0000314"/>
    <property type="project" value="UniProtKB"/>
</dbReference>
<dbReference type="GO" id="GO:0008270">
    <property type="term" value="F:zinc ion binding"/>
    <property type="evidence" value="ECO:0007669"/>
    <property type="project" value="UniProtKB-KW"/>
</dbReference>
<dbReference type="GO" id="GO:0021766">
    <property type="term" value="P:hippocampus development"/>
    <property type="evidence" value="ECO:0007669"/>
    <property type="project" value="Ensembl"/>
</dbReference>
<dbReference type="GO" id="GO:0006397">
    <property type="term" value="P:mRNA processing"/>
    <property type="evidence" value="ECO:0007669"/>
    <property type="project" value="UniProtKB-KW"/>
</dbReference>
<dbReference type="GO" id="GO:0030182">
    <property type="term" value="P:neuron differentiation"/>
    <property type="evidence" value="ECO:0007669"/>
    <property type="project" value="Ensembl"/>
</dbReference>
<dbReference type="GO" id="GO:0000956">
    <property type="term" value="P:nuclear-transcribed mRNA catabolic process"/>
    <property type="evidence" value="ECO:0000318"/>
    <property type="project" value="GO_Central"/>
</dbReference>
<dbReference type="GO" id="GO:0060041">
    <property type="term" value="P:retina development in camera-type eye"/>
    <property type="evidence" value="ECO:0007669"/>
    <property type="project" value="Ensembl"/>
</dbReference>
<dbReference type="GO" id="GO:0006401">
    <property type="term" value="P:RNA catabolic process"/>
    <property type="evidence" value="ECO:0000304"/>
    <property type="project" value="ProtInc"/>
</dbReference>
<dbReference type="GO" id="GO:0016070">
    <property type="term" value="P:RNA metabolic process"/>
    <property type="evidence" value="ECO:0000250"/>
    <property type="project" value="UniProtKB"/>
</dbReference>
<dbReference type="GO" id="GO:0006396">
    <property type="term" value="P:RNA processing"/>
    <property type="evidence" value="ECO:0000304"/>
    <property type="project" value="ProtInc"/>
</dbReference>
<dbReference type="GO" id="GO:0006364">
    <property type="term" value="P:rRNA processing"/>
    <property type="evidence" value="ECO:0000304"/>
    <property type="project" value="Reactome"/>
</dbReference>
<dbReference type="GO" id="GO:0007283">
    <property type="term" value="P:spermatogenesis"/>
    <property type="evidence" value="ECO:0000270"/>
    <property type="project" value="UniProtKB"/>
</dbReference>
<dbReference type="GO" id="GO:0006369">
    <property type="term" value="P:termination of RNA polymerase II transcription"/>
    <property type="evidence" value="ECO:0000315"/>
    <property type="project" value="UniProtKB"/>
</dbReference>
<dbReference type="CDD" id="cd18673">
    <property type="entry name" value="PIN_XRN1-2-like"/>
    <property type="match status" value="1"/>
</dbReference>
<dbReference type="FunFam" id="1.25.40.1050:FF:000002">
    <property type="entry name" value="5'-3' exoribonuclease"/>
    <property type="match status" value="1"/>
</dbReference>
<dbReference type="FunFam" id="3.40.50.12390:FF:000001">
    <property type="entry name" value="5'-3' exoribonuclease"/>
    <property type="match status" value="1"/>
</dbReference>
<dbReference type="FunFam" id="3.40.50.12390:FF:000003">
    <property type="entry name" value="5'-3' exoribonuclease"/>
    <property type="match status" value="1"/>
</dbReference>
<dbReference type="Gene3D" id="1.25.40.1050">
    <property type="match status" value="1"/>
</dbReference>
<dbReference type="Gene3D" id="3.40.50.12390">
    <property type="match status" value="2"/>
</dbReference>
<dbReference type="InterPro" id="IPR027073">
    <property type="entry name" value="5_3_exoribonuclease"/>
</dbReference>
<dbReference type="InterPro" id="IPR041412">
    <property type="entry name" value="Xrn1_helical"/>
</dbReference>
<dbReference type="InterPro" id="IPR004859">
    <property type="entry name" value="Xrn1_N"/>
</dbReference>
<dbReference type="InterPro" id="IPR017151">
    <property type="entry name" value="Xrn2/3/4"/>
</dbReference>
<dbReference type="PANTHER" id="PTHR12341:SF41">
    <property type="entry name" value="5'-3' EXORIBONUCLEASE 2"/>
    <property type="match status" value="1"/>
</dbReference>
<dbReference type="PANTHER" id="PTHR12341">
    <property type="entry name" value="5'-&gt;3' EXORIBONUCLEASE"/>
    <property type="match status" value="1"/>
</dbReference>
<dbReference type="Pfam" id="PF17846">
    <property type="entry name" value="XRN_M"/>
    <property type="match status" value="1"/>
</dbReference>
<dbReference type="Pfam" id="PF03159">
    <property type="entry name" value="XRN_N"/>
    <property type="match status" value="1"/>
</dbReference>
<dbReference type="PIRSF" id="PIRSF037239">
    <property type="entry name" value="Exonuclease_Xrn2"/>
    <property type="match status" value="1"/>
</dbReference>
<accession>Q9H0D6</accession>
<accession>Q3L8N4</accession>
<accession>Q6KGZ9</accession>
<accession>Q9BQL1</accession>
<accession>Q9NTW0</accession>
<accession>Q9NXS6</accession>
<accession>Q9UL53</accession>